<evidence type="ECO:0000255" key="1">
    <source>
        <dbReference type="HAMAP-Rule" id="MF_01529"/>
    </source>
</evidence>
<dbReference type="EMBL" id="CP000462">
    <property type="protein sequence ID" value="ABK36634.1"/>
    <property type="molecule type" value="Genomic_DNA"/>
</dbReference>
<dbReference type="RefSeq" id="WP_011704798.1">
    <property type="nucleotide sequence ID" value="NC_008570.1"/>
</dbReference>
<dbReference type="RefSeq" id="YP_855395.1">
    <property type="nucleotide sequence ID" value="NC_008570.1"/>
</dbReference>
<dbReference type="SMR" id="A0KGK4"/>
<dbReference type="STRING" id="380703.AHA_0853"/>
<dbReference type="EnsemblBacteria" id="ABK36634">
    <property type="protein sequence ID" value="ABK36634"/>
    <property type="gene ID" value="AHA_0853"/>
</dbReference>
<dbReference type="GeneID" id="4487237"/>
<dbReference type="KEGG" id="aha:AHA_0853"/>
<dbReference type="PATRIC" id="fig|380703.7.peg.856"/>
<dbReference type="eggNOG" id="COG0477">
    <property type="taxonomic scope" value="Bacteria"/>
</dbReference>
<dbReference type="HOGENOM" id="CLU_001265_60_2_6"/>
<dbReference type="OrthoDB" id="56516at2"/>
<dbReference type="Proteomes" id="UP000000756">
    <property type="component" value="Chromosome"/>
</dbReference>
<dbReference type="GO" id="GO:0005886">
    <property type="term" value="C:plasma membrane"/>
    <property type="evidence" value="ECO:0007669"/>
    <property type="project" value="UniProtKB-SubCell"/>
</dbReference>
<dbReference type="GO" id="GO:0022857">
    <property type="term" value="F:transmembrane transporter activity"/>
    <property type="evidence" value="ECO:0007669"/>
    <property type="project" value="UniProtKB-UniRule"/>
</dbReference>
<dbReference type="CDD" id="cd17329">
    <property type="entry name" value="MFS_MdtH_MDR_like"/>
    <property type="match status" value="1"/>
</dbReference>
<dbReference type="Gene3D" id="1.20.1250.20">
    <property type="entry name" value="MFS general substrate transporter like domains"/>
    <property type="match status" value="1"/>
</dbReference>
<dbReference type="HAMAP" id="MF_01529">
    <property type="entry name" value="MFS_MdtH"/>
    <property type="match status" value="1"/>
</dbReference>
<dbReference type="InterPro" id="IPR011701">
    <property type="entry name" value="MFS"/>
</dbReference>
<dbReference type="InterPro" id="IPR020846">
    <property type="entry name" value="MFS_dom"/>
</dbReference>
<dbReference type="InterPro" id="IPR036259">
    <property type="entry name" value="MFS_trans_sf"/>
</dbReference>
<dbReference type="InterPro" id="IPR050171">
    <property type="entry name" value="MFS_Transporters"/>
</dbReference>
<dbReference type="InterPro" id="IPR022855">
    <property type="entry name" value="Multidrug-R_MdtH"/>
</dbReference>
<dbReference type="NCBIfam" id="NF008650">
    <property type="entry name" value="PRK11646.1"/>
    <property type="match status" value="1"/>
</dbReference>
<dbReference type="PANTHER" id="PTHR23517:SF2">
    <property type="entry name" value="MULTIDRUG RESISTANCE PROTEIN MDTH"/>
    <property type="match status" value="1"/>
</dbReference>
<dbReference type="PANTHER" id="PTHR23517">
    <property type="entry name" value="RESISTANCE PROTEIN MDTM, PUTATIVE-RELATED-RELATED"/>
    <property type="match status" value="1"/>
</dbReference>
<dbReference type="Pfam" id="PF07690">
    <property type="entry name" value="MFS_1"/>
    <property type="match status" value="1"/>
</dbReference>
<dbReference type="SUPFAM" id="SSF103473">
    <property type="entry name" value="MFS general substrate transporter"/>
    <property type="match status" value="1"/>
</dbReference>
<dbReference type="PROSITE" id="PS50850">
    <property type="entry name" value="MFS"/>
    <property type="match status" value="1"/>
</dbReference>
<sequence>MVERARRLGRWFLALDSLLVILGFFVVMPMISLRFVDQLGWAAGVVGLALGLRQLTQQGLGILGGSLADKFGARPLIVGGMLLRAAGFASLAYAQSGLELILSCVISGLGGCLFDPPRAALVIKFTRPRQRGRYISLLMMLESAGAVVGALLGSWLLNFDFEYVCLLGAGLFVCAALCNLLILPAYKLSVRPTPIRAGLGQVLADKAFCRLVLILSGYYALWVQVMLIFPILVKQMAGTTTAVGWMYTLETAISLALLYPLARYGERHFKLESRLMAGVLLMTTGIGLVAFANTLPAVFMLLACFYLGIVIAEPARETLMTKLAQPGARGSYMGFSRLGLALGGMTGYVGGGALHDYAMLQGQPWLPWLVLGTVGVTTLLLLVNCFHREPSLARVNI</sequence>
<reference key="1">
    <citation type="journal article" date="2006" name="J. Bacteriol.">
        <title>Genome sequence of Aeromonas hydrophila ATCC 7966T: jack of all trades.</title>
        <authorList>
            <person name="Seshadri R."/>
            <person name="Joseph S.W."/>
            <person name="Chopra A.K."/>
            <person name="Sha J."/>
            <person name="Shaw J."/>
            <person name="Graf J."/>
            <person name="Haft D.H."/>
            <person name="Wu M."/>
            <person name="Ren Q."/>
            <person name="Rosovitz M.J."/>
            <person name="Madupu R."/>
            <person name="Tallon L."/>
            <person name="Kim M."/>
            <person name="Jin S."/>
            <person name="Vuong H."/>
            <person name="Stine O.C."/>
            <person name="Ali A."/>
            <person name="Horneman A.J."/>
            <person name="Heidelberg J.F."/>
        </authorList>
    </citation>
    <scope>NUCLEOTIDE SEQUENCE [LARGE SCALE GENOMIC DNA]</scope>
    <source>
        <strain>ATCC 7966 / DSM 30187 / BCRC 13018 / CCUG 14551 / JCM 1027 / KCTC 2358 / NCIMB 9240 / NCTC 8049</strain>
    </source>
</reference>
<organism>
    <name type="scientific">Aeromonas hydrophila subsp. hydrophila (strain ATCC 7966 / DSM 30187 / BCRC 13018 / CCUG 14551 / JCM 1027 / KCTC 2358 / NCIMB 9240 / NCTC 8049)</name>
    <dbReference type="NCBI Taxonomy" id="380703"/>
    <lineage>
        <taxon>Bacteria</taxon>
        <taxon>Pseudomonadati</taxon>
        <taxon>Pseudomonadota</taxon>
        <taxon>Gammaproteobacteria</taxon>
        <taxon>Aeromonadales</taxon>
        <taxon>Aeromonadaceae</taxon>
        <taxon>Aeromonas</taxon>
    </lineage>
</organism>
<gene>
    <name evidence="1" type="primary">mdtH</name>
    <name type="ordered locus">AHA_0853</name>
</gene>
<comment type="subcellular location">
    <subcellularLocation>
        <location evidence="1">Cell inner membrane</location>
        <topology evidence="1">Multi-pass membrane protein</topology>
    </subcellularLocation>
</comment>
<comment type="similarity">
    <text evidence="1">Belongs to the major facilitator superfamily. DHA1 family. MdtH (TC 2.A.1.2.21) subfamily.</text>
</comment>
<keyword id="KW-0997">Cell inner membrane</keyword>
<keyword id="KW-1003">Cell membrane</keyword>
<keyword id="KW-0472">Membrane</keyword>
<keyword id="KW-1185">Reference proteome</keyword>
<keyword id="KW-0812">Transmembrane</keyword>
<keyword id="KW-1133">Transmembrane helix</keyword>
<keyword id="KW-0813">Transport</keyword>
<proteinExistence type="inferred from homology"/>
<accession>A0KGK4</accession>
<feature type="chain" id="PRO_0000280493" description="Multidrug resistance protein MdtH">
    <location>
        <begin position="1"/>
        <end position="397"/>
    </location>
</feature>
<feature type="transmembrane region" description="Helical" evidence="1">
    <location>
        <begin position="11"/>
        <end position="31"/>
    </location>
</feature>
<feature type="transmembrane region" description="Helical" evidence="1">
    <location>
        <begin position="32"/>
        <end position="52"/>
    </location>
</feature>
<feature type="transmembrane region" description="Helical" evidence="1">
    <location>
        <begin position="71"/>
        <end position="91"/>
    </location>
</feature>
<feature type="transmembrane region" description="Helical" evidence="1">
    <location>
        <begin position="94"/>
        <end position="114"/>
    </location>
</feature>
<feature type="transmembrane region" description="Helical" evidence="1">
    <location>
        <begin position="137"/>
        <end position="157"/>
    </location>
</feature>
<feature type="transmembrane region" description="Helical" evidence="1">
    <location>
        <begin position="163"/>
        <end position="183"/>
    </location>
</feature>
<feature type="transmembrane region" description="Helical" evidence="1">
    <location>
        <begin position="211"/>
        <end position="231"/>
    </location>
</feature>
<feature type="transmembrane region" description="Helical" evidence="1">
    <location>
        <begin position="242"/>
        <end position="262"/>
    </location>
</feature>
<feature type="transmembrane region" description="Helical" evidence="1">
    <location>
        <begin position="291"/>
        <end position="311"/>
    </location>
</feature>
<feature type="transmembrane region" description="Helical" evidence="1">
    <location>
        <begin position="340"/>
        <end position="360"/>
    </location>
</feature>
<feature type="transmembrane region" description="Helical" evidence="1">
    <location>
        <begin position="366"/>
        <end position="386"/>
    </location>
</feature>
<name>MDTH_AERHH</name>
<protein>
    <recommendedName>
        <fullName evidence="1">Multidrug resistance protein MdtH</fullName>
    </recommendedName>
</protein>